<evidence type="ECO:0000250" key="1">
    <source>
        <dbReference type="UniProtKB" id="P20226"/>
    </source>
</evidence>
<evidence type="ECO:0000250" key="2">
    <source>
        <dbReference type="UniProtKB" id="P29037"/>
    </source>
</evidence>
<evidence type="ECO:0000256" key="3">
    <source>
        <dbReference type="SAM" id="MobiDB-lite"/>
    </source>
</evidence>
<evidence type="ECO:0000305" key="4"/>
<keyword id="KW-0238">DNA-binding</keyword>
<keyword id="KW-0539">Nucleus</keyword>
<keyword id="KW-1185">Reference proteome</keyword>
<keyword id="KW-0677">Repeat</keyword>
<keyword id="KW-0804">Transcription</keyword>
<comment type="function">
    <text evidence="1">General transcription factor that functions at the core of the DNA-binding multiprotein factor TFIID. Binding of TFIID to the TATA box is the initial transcriptional step of the pre-initiation complex (PIC), playing a role in the activation of eukaryotic genes transcribed by RNA polymerase II. Component of a BRF2-containing transcription factor complex that regulates transcription mediated by RNA polymerase III. Component of the transcription factor SL1/TIF-IB complex, which is involved in the assembly of the PIC (pre-initiation complex) during RNA polymerase I-dependent transcription. The rate of PIC formation probably is primarily dependent on the rate of association of SL1 with the rDNA promoter. SL1 is involved in stabilization of nucleolar transcription factor 1/UBTF on rDNA.</text>
</comment>
<comment type="subunit">
    <text evidence="1 2">Binds DNA as monomer. Belongs to the TFIID complex together with the TBP-associated factors (TAFs). Part of a TFIID-containing RNA polymerase II pre-initiation complex that is composed of TBP and at least GTF2A1, GTF2A2, GTF2E1, GTF2E2, GTF2F1, GTF2H2, GTF2H3, GTF2H4, GTF2H5, GTF2B, TCEA1, ERCC2, ERCC3, TAF1, TAF2, TAF3, TAF4, TAF5, TAF6, TAF7, TAF8, TAF9, TAF10, TAF11, TAF12 and TAF13. Component of the transcription factor SL1/TIF-IB complex, composed of TBP and at least TAF1A, TAF1B, TAF1C and TAF1D. Association of TBP to form either TFIID or SL1/TIF-IB appears to be mutually exclusive. Interacts with TAF1A, TAF1B and TAF1C. Interacts with TFIIB, NCOA6, DRAP1, DR1 and ELF3. Interacts with SPIB, SNAPC1, SNAPC2 and SNAPC4. Interacts with UTF1. Interacts with BRF2; this interaction promotes recruitment of BRF2 to TATA box-containing promoters. Interacts with UBTF. Interacts with GPBP1. Interacts with CITED2. Interacts with ATF7IP. Interacts with LLPH. Interacts with HSF1 (via transactivation domain). Interacts with GTF2B (via C-terminus); this interaction with promoter-bound TBP guides RNA polymerase II into the pre-initiation complex (PIC). Interacts with PAX5 (By similarity). Interacts with MSX1; the interaction may inhibit MSX1 autoinactivation (By similarity). Interacts with MSX3 (By similarity).</text>
</comment>
<comment type="subcellular location">
    <subcellularLocation>
        <location evidence="1">Nucleus</location>
    </subcellularLocation>
</comment>
<comment type="similarity">
    <text evidence="4">Belongs to the TBP family.</text>
</comment>
<feature type="chain" id="PRO_0000153957" description="TATA-box-binding protein">
    <location>
        <begin position="1"/>
        <end position="318"/>
    </location>
</feature>
<feature type="repeat" description="1">
    <location>
        <begin position="144"/>
        <end position="220"/>
    </location>
</feature>
<feature type="repeat" description="2">
    <location>
        <begin position="234"/>
        <end position="311"/>
    </location>
</feature>
<feature type="region of interest" description="Disordered" evidence="3">
    <location>
        <begin position="1"/>
        <end position="21"/>
    </location>
</feature>
<feature type="region of interest" description="Disordered" evidence="3">
    <location>
        <begin position="106"/>
        <end position="138"/>
    </location>
</feature>
<feature type="compositionally biased region" description="Low complexity" evidence="3">
    <location>
        <begin position="106"/>
        <end position="117"/>
    </location>
</feature>
<feature type="compositionally biased region" description="Low complexity" evidence="3">
    <location>
        <begin position="125"/>
        <end position="135"/>
    </location>
</feature>
<feature type="binding site" evidence="1">
    <location>
        <position position="146"/>
    </location>
    <ligand>
        <name>DNA</name>
        <dbReference type="ChEBI" id="CHEBI:16991"/>
    </ligand>
</feature>
<feature type="binding site" evidence="1">
    <location>
        <position position="182"/>
    </location>
    <ligand>
        <name>DNA</name>
        <dbReference type="ChEBI" id="CHEBI:16991"/>
    </ligand>
</feature>
<feature type="binding site" evidence="1">
    <location>
        <position position="197"/>
    </location>
    <ligand>
        <name>DNA</name>
        <dbReference type="ChEBI" id="CHEBI:16991"/>
    </ligand>
</feature>
<feature type="binding site" evidence="1">
    <location>
        <position position="236"/>
    </location>
    <ligand>
        <name>DNA</name>
        <dbReference type="ChEBI" id="CHEBI:16991"/>
    </ligand>
</feature>
<feature type="binding site" evidence="1">
    <location>
        <position position="273"/>
    </location>
    <ligand>
        <name>DNA</name>
        <dbReference type="ChEBI" id="CHEBI:16991"/>
    </ligand>
</feature>
<reference key="1">
    <citation type="thesis" date="1994" institute="Kyushu University / Fukuoka" country="Japan">
        <title>The minimum essential region of CCG1/TAF250 required for promoter-selective transcription with TFIID complex.</title>
        <authorList>
            <person name="Noguchi E."/>
        </authorList>
    </citation>
    <scope>NUCLEOTIDE SEQUENCE [MRNA]</scope>
    <source>
        <tissue>Kidney</tissue>
    </source>
</reference>
<gene>
    <name type="primary">TBP</name>
    <name type="synonym">TFIID</name>
</gene>
<protein>
    <recommendedName>
        <fullName>TATA-box-binding protein</fullName>
    </recommendedName>
    <alternativeName>
        <fullName>TATA sequence-binding protein</fullName>
    </alternativeName>
    <alternativeName>
        <fullName>TATA-binding factor</fullName>
    </alternativeName>
    <alternativeName>
        <fullName>TATA-box factor</fullName>
    </alternativeName>
    <alternativeName>
        <fullName>Transcription initiation factor TFIID TBP subunit</fullName>
    </alternativeName>
</protein>
<name>TBP_MESAU</name>
<sequence>MDQNNSLPPYAQGLASPQGAMTPGIPIFSPMMPYGTGLTPQPIQNTNSLSILEEQQREQQQQQQQQQQQQQQAVATAAASVQQSTSQQSTQGASGQTPQLFHSQTLTTAPLPGTTPLYPSPMTPMTPITPATPASESSGIVPQLQNIVSTVNLGCKLDLKTIALRARNAEYNPKRFAAVIMRIREPRTTALIFSSGKMVCTGAKSEEQSRLAARKYARVVQKLGFPAKFLDFKIQNMVGSCDVKFPIRLEGLVLTHQQFSSYEPELFPGLIYRMIKPRIVLLIFVSGKVVLTGAKVRAEIYEAFENIYPILKGFRKTT</sequence>
<proteinExistence type="evidence at transcript level"/>
<accession>P53360</accession>
<dbReference type="EMBL" id="D30051">
    <property type="protein sequence ID" value="BAA06287.1"/>
    <property type="molecule type" value="mRNA"/>
</dbReference>
<dbReference type="RefSeq" id="NP_001268562.1">
    <property type="nucleotide sequence ID" value="NM_001281633.1"/>
</dbReference>
<dbReference type="SMR" id="P53360"/>
<dbReference type="STRING" id="10036.ENSMAUP00000021688"/>
<dbReference type="GeneID" id="101839769"/>
<dbReference type="KEGG" id="maua:101839769"/>
<dbReference type="CTD" id="6908"/>
<dbReference type="eggNOG" id="KOG3302">
    <property type="taxonomic scope" value="Eukaryota"/>
</dbReference>
<dbReference type="OrthoDB" id="2127950at2759"/>
<dbReference type="Proteomes" id="UP000189706">
    <property type="component" value="Unplaced"/>
</dbReference>
<dbReference type="GO" id="GO:0005634">
    <property type="term" value="C:nucleus"/>
    <property type="evidence" value="ECO:0000250"/>
    <property type="project" value="UniProtKB"/>
</dbReference>
<dbReference type="GO" id="GO:0005669">
    <property type="term" value="C:transcription factor TFIID complex"/>
    <property type="evidence" value="ECO:0000250"/>
    <property type="project" value="UniProtKB"/>
</dbReference>
<dbReference type="GO" id="GO:0001164">
    <property type="term" value="F:RNA polymerase I core promoter sequence-specific DNA binding"/>
    <property type="evidence" value="ECO:0000250"/>
    <property type="project" value="UniProtKB"/>
</dbReference>
<dbReference type="GO" id="GO:0001091">
    <property type="term" value="F:RNA polymerase II general transcription initiation factor binding"/>
    <property type="evidence" value="ECO:0000353"/>
    <property type="project" value="BHF-UCL"/>
</dbReference>
<dbReference type="GO" id="GO:0000995">
    <property type="term" value="F:RNA polymerase III general transcription initiation factor activity"/>
    <property type="evidence" value="ECO:0000250"/>
    <property type="project" value="UniProtKB"/>
</dbReference>
<dbReference type="GO" id="GO:0006366">
    <property type="term" value="P:transcription by RNA polymerase II"/>
    <property type="evidence" value="ECO:0000250"/>
    <property type="project" value="UniProtKB"/>
</dbReference>
<dbReference type="GO" id="GO:0006383">
    <property type="term" value="P:transcription by RNA polymerase III"/>
    <property type="evidence" value="ECO:0000250"/>
    <property type="project" value="UniProtKB"/>
</dbReference>
<dbReference type="CDD" id="cd04516">
    <property type="entry name" value="TBP_eukaryotes"/>
    <property type="match status" value="1"/>
</dbReference>
<dbReference type="FunFam" id="3.30.310.10:FF:000001">
    <property type="entry name" value="TATA-box-binding protein 2"/>
    <property type="match status" value="1"/>
</dbReference>
<dbReference type="FunFam" id="3.30.310.10:FF:000002">
    <property type="entry name" value="TATA-box-binding protein 2"/>
    <property type="match status" value="1"/>
</dbReference>
<dbReference type="Gene3D" id="3.30.310.10">
    <property type="entry name" value="TATA-Binding Protein"/>
    <property type="match status" value="2"/>
</dbReference>
<dbReference type="HAMAP" id="MF_00408">
    <property type="entry name" value="TATA_bind_prot_arch"/>
    <property type="match status" value="1"/>
</dbReference>
<dbReference type="InterPro" id="IPR000814">
    <property type="entry name" value="TBP"/>
</dbReference>
<dbReference type="InterPro" id="IPR030491">
    <property type="entry name" value="TBP_CS"/>
</dbReference>
<dbReference type="InterPro" id="IPR012295">
    <property type="entry name" value="TBP_dom_sf"/>
</dbReference>
<dbReference type="InterPro" id="IPR033710">
    <property type="entry name" value="TBP_eukaryotic"/>
</dbReference>
<dbReference type="PANTHER" id="PTHR10126">
    <property type="entry name" value="TATA-BOX BINDING PROTEIN"/>
    <property type="match status" value="1"/>
</dbReference>
<dbReference type="Pfam" id="PF00352">
    <property type="entry name" value="TBP"/>
    <property type="match status" value="2"/>
</dbReference>
<dbReference type="PRINTS" id="PR00686">
    <property type="entry name" value="TIFACTORIID"/>
</dbReference>
<dbReference type="SUPFAM" id="SSF55945">
    <property type="entry name" value="TATA-box binding protein-like"/>
    <property type="match status" value="2"/>
</dbReference>
<dbReference type="PROSITE" id="PS00351">
    <property type="entry name" value="TFIID"/>
    <property type="match status" value="2"/>
</dbReference>
<organism>
    <name type="scientific">Mesocricetus auratus</name>
    <name type="common">Golden hamster</name>
    <dbReference type="NCBI Taxonomy" id="10036"/>
    <lineage>
        <taxon>Eukaryota</taxon>
        <taxon>Metazoa</taxon>
        <taxon>Chordata</taxon>
        <taxon>Craniata</taxon>
        <taxon>Vertebrata</taxon>
        <taxon>Euteleostomi</taxon>
        <taxon>Mammalia</taxon>
        <taxon>Eutheria</taxon>
        <taxon>Euarchontoglires</taxon>
        <taxon>Glires</taxon>
        <taxon>Rodentia</taxon>
        <taxon>Myomorpha</taxon>
        <taxon>Muroidea</taxon>
        <taxon>Cricetidae</taxon>
        <taxon>Cricetinae</taxon>
        <taxon>Mesocricetus</taxon>
    </lineage>
</organism>